<accession>Q4G3D9</accession>
<sequence>MYKNPIKANLGEEVNNSLNYKDVSILSNFVNEQGKILPRRLTGLKSKQQKKVTKLIKQARIAALLPFVIGKN</sequence>
<comment type="subunit">
    <text>Part of the 30S ribosomal subunit.</text>
</comment>
<comment type="subcellular location">
    <subcellularLocation>
        <location>Plastid</location>
        <location>Chloroplast</location>
    </subcellularLocation>
</comment>
<comment type="similarity">
    <text evidence="1">Belongs to the bacterial ribosomal protein bS18 family.</text>
</comment>
<organism>
    <name type="scientific">Emiliania huxleyi</name>
    <name type="common">Coccolithophore</name>
    <name type="synonym">Pontosphaera huxleyi</name>
    <dbReference type="NCBI Taxonomy" id="2903"/>
    <lineage>
        <taxon>Eukaryota</taxon>
        <taxon>Haptista</taxon>
        <taxon>Haptophyta</taxon>
        <taxon>Prymnesiophyceae</taxon>
        <taxon>Isochrysidales</taxon>
        <taxon>Noelaerhabdaceae</taxon>
        <taxon>Emiliania</taxon>
    </lineage>
</organism>
<gene>
    <name evidence="1" type="primary">rps18</name>
</gene>
<name>RR18_EMIHU</name>
<feature type="chain" id="PRO_0000276895" description="Small ribosomal subunit protein bS18c">
    <location>
        <begin position="1"/>
        <end position="72"/>
    </location>
</feature>
<proteinExistence type="inferred from homology"/>
<evidence type="ECO:0000255" key="1">
    <source>
        <dbReference type="HAMAP-Rule" id="MF_00270"/>
    </source>
</evidence>
<evidence type="ECO:0000305" key="2"/>
<reference key="1">
    <citation type="journal article" date="2005" name="DNA Res.">
        <title>The complete plastid genome sequence of the haptophyte Emiliania huxleyi: a comparison to other plastid genomes.</title>
        <authorList>
            <person name="Sanchez-Puerta M.V."/>
            <person name="Bachvaroff T.R."/>
            <person name="Delwiche C.F."/>
        </authorList>
    </citation>
    <scope>NUCLEOTIDE SEQUENCE [LARGE SCALE GENOMIC DNA]</scope>
    <source>
        <strain>CCMP373 / CSIRO-CS-57 / BT6</strain>
    </source>
</reference>
<protein>
    <recommendedName>
        <fullName evidence="1">Small ribosomal subunit protein bS18c</fullName>
    </recommendedName>
    <alternativeName>
        <fullName evidence="2">30S ribosomal protein S18, chloroplastic</fullName>
    </alternativeName>
</protein>
<dbReference type="EMBL" id="AY741371">
    <property type="protein sequence ID" value="AAX13827.1"/>
    <property type="molecule type" value="Genomic_DNA"/>
</dbReference>
<dbReference type="RefSeq" id="YP_277328.1">
    <property type="nucleotide sequence ID" value="NC_007288.1"/>
</dbReference>
<dbReference type="SMR" id="Q4G3D9"/>
<dbReference type="STRING" id="2903.Q4G3D9"/>
<dbReference type="GeneID" id="3562559"/>
<dbReference type="GO" id="GO:0009507">
    <property type="term" value="C:chloroplast"/>
    <property type="evidence" value="ECO:0007669"/>
    <property type="project" value="UniProtKB-SubCell"/>
</dbReference>
<dbReference type="GO" id="GO:0005763">
    <property type="term" value="C:mitochondrial small ribosomal subunit"/>
    <property type="evidence" value="ECO:0007669"/>
    <property type="project" value="TreeGrafter"/>
</dbReference>
<dbReference type="GO" id="GO:0070181">
    <property type="term" value="F:small ribosomal subunit rRNA binding"/>
    <property type="evidence" value="ECO:0007669"/>
    <property type="project" value="TreeGrafter"/>
</dbReference>
<dbReference type="GO" id="GO:0003735">
    <property type="term" value="F:structural constituent of ribosome"/>
    <property type="evidence" value="ECO:0007669"/>
    <property type="project" value="InterPro"/>
</dbReference>
<dbReference type="GO" id="GO:0006412">
    <property type="term" value="P:translation"/>
    <property type="evidence" value="ECO:0007669"/>
    <property type="project" value="UniProtKB-UniRule"/>
</dbReference>
<dbReference type="Gene3D" id="4.10.640.10">
    <property type="entry name" value="Ribosomal protein S18"/>
    <property type="match status" value="1"/>
</dbReference>
<dbReference type="HAMAP" id="MF_00270">
    <property type="entry name" value="Ribosomal_bS18"/>
    <property type="match status" value="1"/>
</dbReference>
<dbReference type="InterPro" id="IPR001648">
    <property type="entry name" value="Ribosomal_bS18"/>
</dbReference>
<dbReference type="InterPro" id="IPR018275">
    <property type="entry name" value="Ribosomal_bS18_CS"/>
</dbReference>
<dbReference type="InterPro" id="IPR036870">
    <property type="entry name" value="Ribosomal_bS18_sf"/>
</dbReference>
<dbReference type="NCBIfam" id="TIGR00165">
    <property type="entry name" value="S18"/>
    <property type="match status" value="1"/>
</dbReference>
<dbReference type="PANTHER" id="PTHR13479">
    <property type="entry name" value="30S RIBOSOMAL PROTEIN S18"/>
    <property type="match status" value="1"/>
</dbReference>
<dbReference type="PANTHER" id="PTHR13479:SF40">
    <property type="entry name" value="SMALL RIBOSOMAL SUBUNIT PROTEIN BS18M"/>
    <property type="match status" value="1"/>
</dbReference>
<dbReference type="Pfam" id="PF01084">
    <property type="entry name" value="Ribosomal_S18"/>
    <property type="match status" value="1"/>
</dbReference>
<dbReference type="PRINTS" id="PR00974">
    <property type="entry name" value="RIBOSOMALS18"/>
</dbReference>
<dbReference type="SUPFAM" id="SSF46911">
    <property type="entry name" value="Ribosomal protein S18"/>
    <property type="match status" value="1"/>
</dbReference>
<dbReference type="PROSITE" id="PS00057">
    <property type="entry name" value="RIBOSOMAL_S18"/>
    <property type="match status" value="1"/>
</dbReference>
<keyword id="KW-0150">Chloroplast</keyword>
<keyword id="KW-0934">Plastid</keyword>
<keyword id="KW-0687">Ribonucleoprotein</keyword>
<keyword id="KW-0689">Ribosomal protein</keyword>
<keyword id="KW-0694">RNA-binding</keyword>
<keyword id="KW-0699">rRNA-binding</keyword>
<geneLocation type="chloroplast"/>